<protein>
    <recommendedName>
        <fullName evidence="1">Octanoyltransferase LipM</fullName>
        <ecNumber evidence="1">2.3.1.181</ecNumber>
    </recommendedName>
    <alternativeName>
        <fullName evidence="1">Octanoyl-[acyl-carrier-protein]:[GcvH] N-octanoyltransferase</fullName>
    </alternativeName>
</protein>
<keyword id="KW-0012">Acyltransferase</keyword>
<keyword id="KW-0808">Transferase</keyword>
<comment type="function">
    <text evidence="1">Catalyzes the transfer of endogenously produced octanoic acid from octanoyl-acyl-carrier-protein onto the lipoyl domain of GcvH, an intermediate carrier during protein lipoylation.</text>
</comment>
<comment type="catalytic activity">
    <reaction evidence="1">
        <text>octanoyl-[ACP] + L-lysyl-[protein] = N(6)-octanoyl-L-lysyl-[protein] + holo-[ACP] + H(+)</text>
        <dbReference type="Rhea" id="RHEA:17665"/>
        <dbReference type="Rhea" id="RHEA-COMP:9636"/>
        <dbReference type="Rhea" id="RHEA-COMP:9685"/>
        <dbReference type="Rhea" id="RHEA-COMP:9752"/>
        <dbReference type="Rhea" id="RHEA-COMP:9928"/>
        <dbReference type="ChEBI" id="CHEBI:15378"/>
        <dbReference type="ChEBI" id="CHEBI:29969"/>
        <dbReference type="ChEBI" id="CHEBI:64479"/>
        <dbReference type="ChEBI" id="CHEBI:78463"/>
        <dbReference type="ChEBI" id="CHEBI:78809"/>
        <dbReference type="EC" id="2.3.1.181"/>
    </reaction>
</comment>
<comment type="pathway">
    <text evidence="1">Protein modification; protein lipoylation via endogenous pathway; protein N(6)-(lipoyl)lysine from octanoyl-[acyl-carrier-protein].</text>
</comment>
<comment type="subunit">
    <text evidence="1">Monomer.</text>
</comment>
<comment type="miscellaneous">
    <text evidence="1">In the reaction, the free carboxyl group of octanoic acid is attached via an amide linkage to the epsilon-amino group of a specific lysine residue of lipoyl domains of lipoate-dependent enzymes. The reaction proceeds via an octanoyl-thioester enzyme intermediate.</text>
</comment>
<comment type="similarity">
    <text evidence="1">Belongs to the octanoyltransferase LipM family.</text>
</comment>
<evidence type="ECO:0000255" key="1">
    <source>
        <dbReference type="HAMAP-Rule" id="MF_02118"/>
    </source>
</evidence>
<evidence type="ECO:0000255" key="2">
    <source>
        <dbReference type="PROSITE-ProRule" id="PRU01067"/>
    </source>
</evidence>
<gene>
    <name evidence="1" type="primary">lipM</name>
    <name type="ordered locus">Moth_1939</name>
</gene>
<accession>Q2RH52</accession>
<dbReference type="EC" id="2.3.1.181" evidence="1"/>
<dbReference type="EMBL" id="CP000232">
    <property type="protein sequence ID" value="ABC20237.1"/>
    <property type="molecule type" value="Genomic_DNA"/>
</dbReference>
<dbReference type="RefSeq" id="YP_430780.1">
    <property type="nucleotide sequence ID" value="NC_007644.1"/>
</dbReference>
<dbReference type="SMR" id="Q2RH52"/>
<dbReference type="STRING" id="264732.Moth_1939"/>
<dbReference type="EnsemblBacteria" id="ABC20237">
    <property type="protein sequence ID" value="ABC20237"/>
    <property type="gene ID" value="Moth_1939"/>
</dbReference>
<dbReference type="KEGG" id="mta:Moth_1939"/>
<dbReference type="PATRIC" id="fig|264732.11.peg.2102"/>
<dbReference type="eggNOG" id="COG0095">
    <property type="taxonomic scope" value="Bacteria"/>
</dbReference>
<dbReference type="HOGENOM" id="CLU_022986_5_0_9"/>
<dbReference type="OrthoDB" id="9788148at2"/>
<dbReference type="GO" id="GO:0033819">
    <property type="term" value="F:lipoyl(octanoyl) transferase activity"/>
    <property type="evidence" value="ECO:0007669"/>
    <property type="project" value="UniProtKB-UniRule"/>
</dbReference>
<dbReference type="GO" id="GO:0009107">
    <property type="term" value="P:lipoate biosynthetic process"/>
    <property type="evidence" value="ECO:0007669"/>
    <property type="project" value="UniProtKB-UniRule"/>
</dbReference>
<dbReference type="GO" id="GO:0036211">
    <property type="term" value="P:protein modification process"/>
    <property type="evidence" value="ECO:0007669"/>
    <property type="project" value="InterPro"/>
</dbReference>
<dbReference type="CDD" id="cd16443">
    <property type="entry name" value="LplA"/>
    <property type="match status" value="1"/>
</dbReference>
<dbReference type="Gene3D" id="3.30.930.10">
    <property type="entry name" value="Bira Bifunctional Protein, Domain 2"/>
    <property type="match status" value="1"/>
</dbReference>
<dbReference type="HAMAP" id="MF_02118">
    <property type="entry name" value="LipM"/>
    <property type="match status" value="1"/>
</dbReference>
<dbReference type="InterPro" id="IPR045864">
    <property type="entry name" value="aa-tRNA-synth_II/BPL/LPL"/>
</dbReference>
<dbReference type="InterPro" id="IPR004143">
    <property type="entry name" value="BPL_LPL_catalytic"/>
</dbReference>
<dbReference type="InterPro" id="IPR024898">
    <property type="entry name" value="LipM"/>
</dbReference>
<dbReference type="InterPro" id="IPR050664">
    <property type="entry name" value="Octanoyltrans_LipM/LipL"/>
</dbReference>
<dbReference type="PANTHER" id="PTHR43679:SF2">
    <property type="entry name" value="OCTANOYL-[GCVH]:PROTEIN N-OCTANOYLTRANSFERASE"/>
    <property type="match status" value="1"/>
</dbReference>
<dbReference type="PANTHER" id="PTHR43679">
    <property type="entry name" value="OCTANOYLTRANSFERASE LIPM-RELATED"/>
    <property type="match status" value="1"/>
</dbReference>
<dbReference type="Pfam" id="PF21948">
    <property type="entry name" value="LplA-B_cat"/>
    <property type="match status" value="1"/>
</dbReference>
<dbReference type="SUPFAM" id="SSF55681">
    <property type="entry name" value="Class II aaRS and biotin synthetases"/>
    <property type="match status" value="1"/>
</dbReference>
<dbReference type="PROSITE" id="PS51733">
    <property type="entry name" value="BPL_LPL_CATALYTIC"/>
    <property type="match status" value="1"/>
</dbReference>
<name>LIPM_MOOTA</name>
<feature type="chain" id="PRO_0000410861" description="Octanoyltransferase LipM">
    <location>
        <begin position="1"/>
        <end position="273"/>
    </location>
</feature>
<feature type="domain" description="BPL/LPL catalytic" evidence="2">
    <location>
        <begin position="33"/>
        <end position="244"/>
    </location>
</feature>
<feature type="active site" description="Acyl-thioester intermediate" evidence="1">
    <location>
        <position position="146"/>
    </location>
</feature>
<feature type="site" description="Lowers pKa of active site Cys" evidence="1">
    <location>
        <position position="161"/>
    </location>
</feature>
<reference key="1">
    <citation type="journal article" date="2008" name="Environ. Microbiol.">
        <title>The complete genome sequence of Moorella thermoacetica (f. Clostridium thermoaceticum).</title>
        <authorList>
            <person name="Pierce E."/>
            <person name="Xie G."/>
            <person name="Barabote R.D."/>
            <person name="Saunders E."/>
            <person name="Han C.S."/>
            <person name="Detter J.C."/>
            <person name="Richardson P."/>
            <person name="Brettin T.S."/>
            <person name="Das A."/>
            <person name="Ljungdahl L.G."/>
            <person name="Ragsdale S.W."/>
        </authorList>
    </citation>
    <scope>NUCLEOTIDE SEQUENCE [LARGE SCALE GENOMIC DNA]</scope>
    <source>
        <strain>ATCC 39073 / JCM 9320</strain>
    </source>
</reference>
<organism>
    <name type="scientific">Moorella thermoacetica (strain ATCC 39073 / JCM 9320)</name>
    <dbReference type="NCBI Taxonomy" id="264732"/>
    <lineage>
        <taxon>Bacteria</taxon>
        <taxon>Bacillati</taxon>
        <taxon>Bacillota</taxon>
        <taxon>Clostridia</taxon>
        <taxon>Moorellales</taxon>
        <taxon>Moorellaceae</taxon>
        <taxon>Moorella</taxon>
    </lineage>
</organism>
<sequence length="273" mass="30196">MPAETWRLLDTGVSDPYTNMAIDEAILLEHREGKTPPTLRFYAWSPPTISLGYFQQLEKEIDLEAVKERGLGLVRRLTGGRAVLHDDEVTYSVVAREDHPLMIGGIRPSYLRLAKALAAGLRELGAPVEIASGRKGGREEHTTAACFDAPSWYEITCGGRKLVGSAQTRKGGVVLQHGSIVLTLNGDDLFAVLKMPSEAVRQRLLAKFYHQACGLEEVLGRRVEAGVIKENIVRAFTRLYAVEFVPGGLTEGEKGRLKELRAKYAAADWLKRR</sequence>
<proteinExistence type="inferred from homology"/>